<organism>
    <name type="scientific">Mus musculus</name>
    <name type="common">Mouse</name>
    <dbReference type="NCBI Taxonomy" id="10090"/>
    <lineage>
        <taxon>Eukaryota</taxon>
        <taxon>Metazoa</taxon>
        <taxon>Chordata</taxon>
        <taxon>Craniata</taxon>
        <taxon>Vertebrata</taxon>
        <taxon>Euteleostomi</taxon>
        <taxon>Mammalia</taxon>
        <taxon>Eutheria</taxon>
        <taxon>Euarchontoglires</taxon>
        <taxon>Glires</taxon>
        <taxon>Rodentia</taxon>
        <taxon>Myomorpha</taxon>
        <taxon>Muroidea</taxon>
        <taxon>Muridae</taxon>
        <taxon>Murinae</taxon>
        <taxon>Mus</taxon>
        <taxon>Mus</taxon>
    </lineage>
</organism>
<name>ORC2_MOUSE</name>
<gene>
    <name type="primary">Orc2</name>
    <name type="synonym">Orc2l</name>
</gene>
<protein>
    <recommendedName>
        <fullName>Origin recognition complex subunit 2</fullName>
    </recommendedName>
</protein>
<accession>Q60862</accession>
<comment type="function">
    <text evidence="1">Component of the origin recognition complex (ORC) that binds origins of replication. DNA-binding is ATP-dependent. The specific DNA sequences that define origins of replication have not been identified yet. ORC is required to assemble the pre-replication complex necessary to initiate DNA replication (By similarity). Binds histone H3 and H4 trimethylation marks H3K9me3, H3K20me3 and H4K27me3. Stabilizes LRWD1, by protecting it from ubiquitin-mediated proteasomal degradation. Also stabilizes ORC3 (By similarity).</text>
</comment>
<comment type="subunit">
    <text evidence="2 4">Component of ORC, a complex composed of at least 6 subunits: ORC1, ORC2, ORC3, ORC4, ORC5 and ORC6. ORC is regulated in a cell-cycle dependent manner. It is sequentially assembled at the exit from anaphase of mitosis and disassembled as cells enter S phase (By similarity). Interacts with DBF4 (PubMed:12614612). Interacts with MCM10. Interacts with LRWD1 throughout the cell cycle; this interaction, which occurs only with non-ubiquitinated form of LRWD1, prevents LRWD1 ubiquitination and hence stabilizes the protein. Interacts with POLQ (By similarity).</text>
</comment>
<comment type="subcellular location">
    <subcellularLocation>
        <location>Nucleus</location>
    </subcellularLocation>
</comment>
<comment type="similarity">
    <text evidence="5">Belongs to the ORC2 family.</text>
</comment>
<sequence length="576" mass="65893">MSTLQLKETKVPSVQFVGDDDVLSHILDREGGTKLKKEKAQLLVNPQKVIKKADCELEKSDLEVLEDQNYVKVLGRNIQESLGNGSAKDGRNKVYSFQQRKHPEEMTKLALELAKTSGKKDPLDSNDPEITKNIAQKSKGHSTSEKAPLVNNNKTEFLSTQPHNLRKRIIASRSHYDSESEYSASSSEDDEEATKDEEEDTNVARLSQKSQGQNRLLPAPVSKETLPKKKKRDKASDLVEEYFEAHSSSKVLTSDRTLQRLRRARVDQKTLHNLLRKFVPSFSAEIERLNQQHEKLFHKWMLQLHLGFNIVLYGLGSKRDLLEKFRTTMLQDSIHVVINGYFPGVSVKSILNSITEDVLSHVGTFQSVLDQRDWIINRFKEDSSLELFLLIHNLDSQMLRGDNSQQILGQLSSLHNVYLIASIDHLNAPLMWDHAKQSLYNWLWYETTTYSPYTEETSYENSLLVKQSGSLPLSSLIHVLRSLTPNARGIFRLLMKFQLDNQDSPSYIGLSFQDFYQQCREAFLVNSDLTLRAQLTEFRDHKLIRTKKGTDGVEYLLIPVDSGILADFLEKEEEEA</sequence>
<feature type="chain" id="PRO_0000127076" description="Origin recognition complex subunit 2">
    <location>
        <begin position="1"/>
        <end position="576"/>
    </location>
</feature>
<feature type="repeat" description="Involved in LRWD1-binding" evidence="1">
    <location>
        <begin position="1"/>
        <end position="100"/>
    </location>
</feature>
<feature type="region of interest" description="Disordered" evidence="3">
    <location>
        <begin position="112"/>
        <end position="233"/>
    </location>
</feature>
<feature type="compositionally biased region" description="Polar residues" evidence="3">
    <location>
        <begin position="150"/>
        <end position="163"/>
    </location>
</feature>
<feature type="compositionally biased region" description="Acidic residues" evidence="3">
    <location>
        <begin position="187"/>
        <end position="201"/>
    </location>
</feature>
<feature type="compositionally biased region" description="Polar residues" evidence="3">
    <location>
        <begin position="204"/>
        <end position="214"/>
    </location>
</feature>
<feature type="modified residue" description="Phosphothreonine" evidence="2">
    <location>
        <position position="116"/>
    </location>
</feature>
<feature type="modified residue" description="Phosphothreonine" evidence="2">
    <location>
        <position position="225"/>
    </location>
</feature>
<feature type="modified residue" description="Phosphoserine" evidence="2">
    <location>
        <position position="247"/>
    </location>
</feature>
<reference key="1">
    <citation type="journal article" date="1996" name="Genomics">
        <title>Mouse and human homologues of the yeast origin of replication recognition complex subunit ORC2 and chromosomal localization of the cognate human gene ORC2L.</title>
        <authorList>
            <person name="Takahara K."/>
            <person name="Bong M."/>
            <person name="Brevard R."/>
            <person name="Eddy R.L."/>
            <person name="Haley L.L."/>
            <person name="Sait S.J."/>
            <person name="Shows T.B."/>
            <person name="Hoffman G.G."/>
            <person name="Greenspan D.S."/>
        </authorList>
    </citation>
    <scope>NUCLEOTIDE SEQUENCE [MRNA]</scope>
</reference>
<reference key="2">
    <citation type="journal article" date="2004" name="Genome Res.">
        <title>The status, quality, and expansion of the NIH full-length cDNA project: the Mammalian Gene Collection (MGC).</title>
        <authorList>
            <consortium name="The MGC Project Team"/>
        </authorList>
    </citation>
    <scope>NUCLEOTIDE SEQUENCE [LARGE SCALE MRNA]</scope>
    <source>
        <strain>FVB/N</strain>
        <tissue>Kidney</tissue>
    </source>
</reference>
<reference key="3">
    <citation type="journal article" date="2003" name="J. Mol. Biol.">
        <title>Interaction and assembly of murine pre-replicative complex proteins in yeast and mouse cells.</title>
        <authorList>
            <person name="Kneissl M."/>
            <person name="Puetter V."/>
            <person name="Szalay A.A."/>
            <person name="Grummt F."/>
        </authorList>
    </citation>
    <scope>INTERACTION WITH DBF4</scope>
</reference>
<proteinExistence type="evidence at protein level"/>
<evidence type="ECO:0000250" key="1"/>
<evidence type="ECO:0000250" key="2">
    <source>
        <dbReference type="UniProtKB" id="Q13416"/>
    </source>
</evidence>
<evidence type="ECO:0000256" key="3">
    <source>
        <dbReference type="SAM" id="MobiDB-lite"/>
    </source>
</evidence>
<evidence type="ECO:0000269" key="4">
    <source>
    </source>
</evidence>
<evidence type="ECO:0000305" key="5"/>
<dbReference type="EMBL" id="U27457">
    <property type="protein sequence ID" value="AAB33994.1"/>
    <property type="molecule type" value="mRNA"/>
</dbReference>
<dbReference type="EMBL" id="BC015257">
    <property type="protein sequence ID" value="AAH15257.1"/>
    <property type="molecule type" value="mRNA"/>
</dbReference>
<dbReference type="CCDS" id="CCDS14975.1"/>
<dbReference type="RefSeq" id="NP_001258455.1">
    <property type="nucleotide sequence ID" value="NM_001271526.2"/>
</dbReference>
<dbReference type="RefSeq" id="NP_001407336.1">
    <property type="nucleotide sequence ID" value="NM_001420407.1"/>
</dbReference>
<dbReference type="RefSeq" id="NP_032791.1">
    <property type="nucleotide sequence ID" value="NM_008765.4"/>
</dbReference>
<dbReference type="SMR" id="Q60862"/>
<dbReference type="BioGRID" id="201975">
    <property type="interactions" value="11"/>
</dbReference>
<dbReference type="ComplexPortal" id="CPX-1915">
    <property type="entry name" value="Nuclear origin recognition complex"/>
</dbReference>
<dbReference type="CORUM" id="Q60862"/>
<dbReference type="FunCoup" id="Q60862">
    <property type="interactions" value="4084"/>
</dbReference>
<dbReference type="IntAct" id="Q60862">
    <property type="interactions" value="10"/>
</dbReference>
<dbReference type="STRING" id="10090.ENSMUSP00000027198"/>
<dbReference type="iPTMnet" id="Q60862"/>
<dbReference type="PhosphoSitePlus" id="Q60862"/>
<dbReference type="PaxDb" id="10090-ENSMUSP00000027198"/>
<dbReference type="ProteomicsDB" id="294106"/>
<dbReference type="Pumba" id="Q60862"/>
<dbReference type="Antibodypedia" id="34131">
    <property type="antibodies" value="222 antibodies from 36 providers"/>
</dbReference>
<dbReference type="DNASU" id="18393"/>
<dbReference type="Ensembl" id="ENSMUST00000027198.12">
    <property type="protein sequence ID" value="ENSMUSP00000027198.6"/>
    <property type="gene ID" value="ENSMUSG00000026037.15"/>
</dbReference>
<dbReference type="GeneID" id="18393"/>
<dbReference type="KEGG" id="mmu:18393"/>
<dbReference type="UCSC" id="uc007bcd.2">
    <property type="organism name" value="mouse"/>
</dbReference>
<dbReference type="AGR" id="MGI:1328306"/>
<dbReference type="CTD" id="4999"/>
<dbReference type="MGI" id="MGI:1328306">
    <property type="gene designation" value="Orc2"/>
</dbReference>
<dbReference type="VEuPathDB" id="HostDB:ENSMUSG00000026037"/>
<dbReference type="eggNOG" id="KOG2928">
    <property type="taxonomic scope" value="Eukaryota"/>
</dbReference>
<dbReference type="GeneTree" id="ENSGT00390000015228"/>
<dbReference type="InParanoid" id="Q60862"/>
<dbReference type="OMA" id="AHERYFF"/>
<dbReference type="OrthoDB" id="20198at2759"/>
<dbReference type="PhylomeDB" id="Q60862"/>
<dbReference type="TreeFam" id="TF101092"/>
<dbReference type="Reactome" id="R-MMU-176187">
    <property type="pathway name" value="Activation of ATR in response to replication stress"/>
</dbReference>
<dbReference type="Reactome" id="R-MMU-68616">
    <property type="pathway name" value="Assembly of the ORC complex at the origin of replication"/>
</dbReference>
<dbReference type="Reactome" id="R-MMU-68689">
    <property type="pathway name" value="CDC6 association with the ORC:origin complex"/>
</dbReference>
<dbReference type="Reactome" id="R-MMU-68949">
    <property type="pathway name" value="Orc1 removal from chromatin"/>
</dbReference>
<dbReference type="Reactome" id="R-MMU-68962">
    <property type="pathway name" value="Activation of the pre-replicative complex"/>
</dbReference>
<dbReference type="BioGRID-ORCS" id="18393">
    <property type="hits" value="4 hits in 79 CRISPR screens"/>
</dbReference>
<dbReference type="ChiTaRS" id="Orc2">
    <property type="organism name" value="mouse"/>
</dbReference>
<dbReference type="PRO" id="PR:Q60862"/>
<dbReference type="Proteomes" id="UP000000589">
    <property type="component" value="Chromosome 1"/>
</dbReference>
<dbReference type="RNAct" id="Q60862">
    <property type="molecule type" value="protein"/>
</dbReference>
<dbReference type="Bgee" id="ENSMUSG00000026037">
    <property type="expression patterns" value="Expressed in spermatocyte and 254 other cell types or tissues"/>
</dbReference>
<dbReference type="ExpressionAtlas" id="Q60862">
    <property type="expression patterns" value="baseline and differential"/>
</dbReference>
<dbReference type="GO" id="GO:0005813">
    <property type="term" value="C:centrosome"/>
    <property type="evidence" value="ECO:0007669"/>
    <property type="project" value="Ensembl"/>
</dbReference>
<dbReference type="GO" id="GO:0000785">
    <property type="term" value="C:chromatin"/>
    <property type="evidence" value="ECO:0000314"/>
    <property type="project" value="MGI"/>
</dbReference>
<dbReference type="GO" id="GO:0000781">
    <property type="term" value="C:chromosome, telomeric region"/>
    <property type="evidence" value="ECO:0007669"/>
    <property type="project" value="Ensembl"/>
</dbReference>
<dbReference type="GO" id="GO:0000792">
    <property type="term" value="C:heterochromatin"/>
    <property type="evidence" value="ECO:0000314"/>
    <property type="project" value="MGI"/>
</dbReference>
<dbReference type="GO" id="GO:0000939">
    <property type="term" value="C:inner kinetochore"/>
    <property type="evidence" value="ECO:0000314"/>
    <property type="project" value="MGI"/>
</dbReference>
<dbReference type="GO" id="GO:0005664">
    <property type="term" value="C:nuclear origin of replication recognition complex"/>
    <property type="evidence" value="ECO:0000314"/>
    <property type="project" value="MGI"/>
</dbReference>
<dbReference type="GO" id="GO:0005654">
    <property type="term" value="C:nucleoplasm"/>
    <property type="evidence" value="ECO:0007669"/>
    <property type="project" value="Ensembl"/>
</dbReference>
<dbReference type="GO" id="GO:0003688">
    <property type="term" value="F:DNA replication origin binding"/>
    <property type="evidence" value="ECO:0000314"/>
    <property type="project" value="MGI"/>
</dbReference>
<dbReference type="GO" id="GO:0006270">
    <property type="term" value="P:DNA replication initiation"/>
    <property type="evidence" value="ECO:0000266"/>
    <property type="project" value="ComplexPortal"/>
</dbReference>
<dbReference type="InterPro" id="IPR007220">
    <property type="entry name" value="ORC2"/>
</dbReference>
<dbReference type="InterPro" id="IPR056772">
    <property type="entry name" value="RecA-like_ORC2"/>
</dbReference>
<dbReference type="InterPro" id="IPR056773">
    <property type="entry name" value="WHD_ORC2"/>
</dbReference>
<dbReference type="PANTHER" id="PTHR14052">
    <property type="entry name" value="ORIGIN RECOGNITION COMPLEX SUBUNIT 2"/>
    <property type="match status" value="1"/>
</dbReference>
<dbReference type="PANTHER" id="PTHR14052:SF0">
    <property type="entry name" value="ORIGIN RECOGNITION COMPLEX SUBUNIT 2"/>
    <property type="match status" value="1"/>
</dbReference>
<dbReference type="Pfam" id="PF04084">
    <property type="entry name" value="RecA-like_ORC2"/>
    <property type="match status" value="1"/>
</dbReference>
<dbReference type="Pfam" id="PF24882">
    <property type="entry name" value="WHD_ORC2"/>
    <property type="match status" value="1"/>
</dbReference>
<keyword id="KW-0235">DNA replication</keyword>
<keyword id="KW-0539">Nucleus</keyword>
<keyword id="KW-0597">Phosphoprotein</keyword>
<keyword id="KW-1185">Reference proteome</keyword>